<feature type="chain" id="PRO_0000390387" description="Homeobox protein engrailed">
    <location>
        <begin position="1"/>
        <end position="799"/>
    </location>
</feature>
<feature type="DNA-binding region" description="Homeobox" evidence="3">
    <location>
        <begin position="698"/>
        <end position="757"/>
    </location>
</feature>
<feature type="region of interest" description="Disordered" evidence="4">
    <location>
        <begin position="189"/>
        <end position="331"/>
    </location>
</feature>
<feature type="region of interest" description="Disordered" evidence="4">
    <location>
        <begin position="369"/>
        <end position="444"/>
    </location>
</feature>
<feature type="region of interest" description="Disordered" evidence="4">
    <location>
        <begin position="554"/>
        <end position="664"/>
    </location>
</feature>
<feature type="region of interest" description="Disordered" evidence="4">
    <location>
        <begin position="678"/>
        <end position="705"/>
    </location>
</feature>
<feature type="compositionally biased region" description="Polar residues" evidence="4">
    <location>
        <begin position="210"/>
        <end position="222"/>
    </location>
</feature>
<feature type="compositionally biased region" description="Basic and acidic residues" evidence="4">
    <location>
        <begin position="228"/>
        <end position="239"/>
    </location>
</feature>
<feature type="compositionally biased region" description="Basic and acidic residues" evidence="4">
    <location>
        <begin position="246"/>
        <end position="256"/>
    </location>
</feature>
<feature type="compositionally biased region" description="Polar residues" evidence="4">
    <location>
        <begin position="284"/>
        <end position="299"/>
    </location>
</feature>
<feature type="compositionally biased region" description="Polar residues" evidence="4">
    <location>
        <begin position="377"/>
        <end position="401"/>
    </location>
</feature>
<feature type="compositionally biased region" description="Low complexity" evidence="4">
    <location>
        <begin position="416"/>
        <end position="431"/>
    </location>
</feature>
<feature type="compositionally biased region" description="Basic and acidic residues" evidence="4">
    <location>
        <begin position="608"/>
        <end position="619"/>
    </location>
</feature>
<feature type="compositionally biased region" description="Basic and acidic residues" evidence="4">
    <location>
        <begin position="629"/>
        <end position="648"/>
    </location>
</feature>
<comment type="function">
    <text evidence="7">May be involved in shell and shell gland formation during development.</text>
</comment>
<comment type="subcellular location">
    <subcellularLocation>
        <location evidence="3">Nucleus</location>
    </subcellularLocation>
</comment>
<comment type="tissue specificity">
    <text evidence="5">Expressed in the dorsal ectoderm of early gastrulae in a band corresponding to the peripheral area of the presumptive shell gland. Also expressed at four points along the posterior ectoderm. In late gastrulae, it is predominantly expressed in the peripheral ectoderm of the shell gland and in spots at the posterior end behind the presumptive foot. Expressed in late trochophore larvae at four points behind the foot, at two locations at the base of the foot and in the peripheral ectoderm of the shell gland.</text>
</comment>
<comment type="developmental stage">
    <text evidence="5">Expressed during embryonic development in the early and late gastrula stages, but not in the gastrulating blastula stage. Also expressed in the late trochophore stage.</text>
</comment>
<comment type="similarity">
    <text evidence="2">Belongs to the engrailed homeobox family.</text>
</comment>
<name>HMEN_LYMST</name>
<reference evidence="7 8" key="1">
    <citation type="journal article" date="2008" name="Dev. Genes Evol.">
        <title>Expression patterns of engrailed and dpp in the gastropod Lymnaea stagnalis.</title>
        <authorList>
            <person name="Iijima M."/>
            <person name="Takeuchi T."/>
            <person name="Sarashina I."/>
            <person name="Endo K."/>
        </authorList>
    </citation>
    <scope>NUCLEOTIDE SEQUENCE [MRNA]</scope>
    <scope>PROBABLE FUNCTION</scope>
    <scope>TISSUE SPECIFICITY</scope>
    <scope>DEVELOPMENTAL STAGE</scope>
    <source>
        <tissue evidence="5">Mantle</tissue>
    </source>
</reference>
<proteinExistence type="evidence at transcript level"/>
<keyword id="KW-0217">Developmental protein</keyword>
<keyword id="KW-0238">DNA-binding</keyword>
<keyword id="KW-0371">Homeobox</keyword>
<keyword id="KW-0539">Nucleus</keyword>
<protein>
    <recommendedName>
        <fullName evidence="1 8">Homeobox protein engrailed</fullName>
    </recommendedName>
    <alternativeName>
        <fullName evidence="6">Lsten</fullName>
    </alternativeName>
</protein>
<accession>A9ZPC9</accession>
<evidence type="ECO:0000250" key="1">
    <source>
        <dbReference type="UniProtKB" id="P02836"/>
    </source>
</evidence>
<evidence type="ECO:0000255" key="2"/>
<evidence type="ECO:0000255" key="3">
    <source>
        <dbReference type="PROSITE-ProRule" id="PRU00108"/>
    </source>
</evidence>
<evidence type="ECO:0000256" key="4">
    <source>
        <dbReference type="SAM" id="MobiDB-lite"/>
    </source>
</evidence>
<evidence type="ECO:0000269" key="5">
    <source>
    </source>
</evidence>
<evidence type="ECO:0000303" key="6">
    <source>
    </source>
</evidence>
<evidence type="ECO:0000305" key="7"/>
<evidence type="ECO:0000312" key="8">
    <source>
        <dbReference type="EMBL" id="BAF96782.1"/>
    </source>
</evidence>
<dbReference type="EMBL" id="AB331395">
    <property type="protein sequence ID" value="BAF96782.1"/>
    <property type="molecule type" value="mRNA"/>
</dbReference>
<dbReference type="SMR" id="A9ZPC9"/>
<dbReference type="GO" id="GO:0005634">
    <property type="term" value="C:nucleus"/>
    <property type="evidence" value="ECO:0007669"/>
    <property type="project" value="UniProtKB-SubCell"/>
</dbReference>
<dbReference type="GO" id="GO:0000981">
    <property type="term" value="F:DNA-binding transcription factor activity, RNA polymerase II-specific"/>
    <property type="evidence" value="ECO:0007669"/>
    <property type="project" value="InterPro"/>
</dbReference>
<dbReference type="GO" id="GO:0000978">
    <property type="term" value="F:RNA polymerase II cis-regulatory region sequence-specific DNA binding"/>
    <property type="evidence" value="ECO:0007669"/>
    <property type="project" value="TreeGrafter"/>
</dbReference>
<dbReference type="GO" id="GO:0030182">
    <property type="term" value="P:neuron differentiation"/>
    <property type="evidence" value="ECO:0007669"/>
    <property type="project" value="TreeGrafter"/>
</dbReference>
<dbReference type="CDD" id="cd00086">
    <property type="entry name" value="homeodomain"/>
    <property type="match status" value="1"/>
</dbReference>
<dbReference type="FunFam" id="1.10.10.60:FF:000189">
    <property type="entry name" value="Homeobox protein engrailed-like"/>
    <property type="match status" value="1"/>
</dbReference>
<dbReference type="Gene3D" id="1.10.10.60">
    <property type="entry name" value="Homeodomain-like"/>
    <property type="match status" value="1"/>
</dbReference>
<dbReference type="InterPro" id="IPR050720">
    <property type="entry name" value="Engrailed_Homeobox_TFs"/>
</dbReference>
<dbReference type="InterPro" id="IPR001356">
    <property type="entry name" value="HD"/>
</dbReference>
<dbReference type="InterPro" id="IPR000747">
    <property type="entry name" value="HD_engrailed"/>
</dbReference>
<dbReference type="InterPro" id="IPR019549">
    <property type="entry name" value="Homeobox-engrailed_C-terminal"/>
</dbReference>
<dbReference type="InterPro" id="IPR017970">
    <property type="entry name" value="Homeobox_CS"/>
</dbReference>
<dbReference type="InterPro" id="IPR009057">
    <property type="entry name" value="Homeodomain-like_sf"/>
</dbReference>
<dbReference type="InterPro" id="IPR000047">
    <property type="entry name" value="HTH_motif"/>
</dbReference>
<dbReference type="PANTHER" id="PTHR24341">
    <property type="entry name" value="HOMEOBOX PROTEIN ENGRAILED"/>
    <property type="match status" value="1"/>
</dbReference>
<dbReference type="PANTHER" id="PTHR24341:SF6">
    <property type="entry name" value="HOMEOBOX PROTEIN INVECTED"/>
    <property type="match status" value="1"/>
</dbReference>
<dbReference type="Pfam" id="PF10525">
    <property type="entry name" value="Engrail_1_C_sig"/>
    <property type="match status" value="1"/>
</dbReference>
<dbReference type="Pfam" id="PF00046">
    <property type="entry name" value="Homeodomain"/>
    <property type="match status" value="1"/>
</dbReference>
<dbReference type="PRINTS" id="PR00026">
    <property type="entry name" value="ENGRAILED"/>
</dbReference>
<dbReference type="PRINTS" id="PR00031">
    <property type="entry name" value="HTHREPRESSR"/>
</dbReference>
<dbReference type="SMART" id="SM00389">
    <property type="entry name" value="HOX"/>
    <property type="match status" value="1"/>
</dbReference>
<dbReference type="SUPFAM" id="SSF46689">
    <property type="entry name" value="Homeodomain-like"/>
    <property type="match status" value="1"/>
</dbReference>
<dbReference type="PROSITE" id="PS00027">
    <property type="entry name" value="HOMEOBOX_1"/>
    <property type="match status" value="1"/>
</dbReference>
<dbReference type="PROSITE" id="PS50071">
    <property type="entry name" value="HOMEOBOX_2"/>
    <property type="match status" value="1"/>
</dbReference>
<sequence length="799" mass="88245">METIGFMKNIETFAFPKQETVAMDDRAAASNFLGQPPVGGPPVKDLSALKRPASEMVKSHVGLFSPVKRRRHCGHSSVSDLARSASCVRSLAMKAKNTWMSNVPVMSSTHLVKRECPPVQGADLSDNLATASSPAHTGKGYTPFEDICLKQLLEVSRHKLFRSLEEVRGSDVRHDSRCDVPRAVRCRSLPSRMTPEKNSAEVSIGGLKDQSPSTSIRSNLVSSLLGVSRRDDQETSDSCHDDDDDRAINDSERYDVSECDESGPPTPSSGFIDIEADTPPCSPLNLTTTGGDSVSQLFHSSGHGVGDRQRNTASTDAKSSHIKSKSEDATKDKLGPCCCCGTTCSGGTCKEKKTNFSIDAILRPDFGSGNFLGQDGHTFQPNEDHQTVSSAQTTPRFSSPDSAFKVVDLRTRSRSESLSSPSSSSSSSRSSPSPPLTSPVSLRQKWERQTGSFMRRHLKGQEHFNFPQSLFPNPSKDLENFIGRDFPFISPPQGNPLVKFPNIFPDQLSHLHPAMPAECVDPRTFYYAPENFLSKGQQPLLSYDMSKLFGRSLHPFLNSPPKPQPQKRPGHHLAPTPVEGVTLKSVGTNHNPKVLPEVKTPVQSPQGDQKKRSRDESASKGKQVADQNVHLKENSQKSDPVLKQEKGNRKVSPAGASPETDKAKNPLWPAWVFCTRYSDRPSSGPRSRKPKRSKAQDEKRPRTAFTNDQLQRLKREFDECRYLTETRRKNLADELGLTESQIKIWFQNKRAKIKKSVGVRNPLALQLMEQGLYNHSTIKEMMEEGMYPHTPSQAGDDSS</sequence>
<organism>
    <name type="scientific">Lymnaea stagnalis</name>
    <name type="common">Great pond snail</name>
    <name type="synonym">Helix stagnalis</name>
    <dbReference type="NCBI Taxonomy" id="6523"/>
    <lineage>
        <taxon>Eukaryota</taxon>
        <taxon>Metazoa</taxon>
        <taxon>Spiralia</taxon>
        <taxon>Lophotrochozoa</taxon>
        <taxon>Mollusca</taxon>
        <taxon>Gastropoda</taxon>
        <taxon>Heterobranchia</taxon>
        <taxon>Euthyneura</taxon>
        <taxon>Panpulmonata</taxon>
        <taxon>Hygrophila</taxon>
        <taxon>Lymnaeoidea</taxon>
        <taxon>Lymnaeidae</taxon>
        <taxon>Lymnaea</taxon>
    </lineage>
</organism>
<gene>
    <name evidence="1" type="primary">EN</name>
</gene>